<dbReference type="EMBL" id="AL049658">
    <property type="protein sequence ID" value="CAB41131.1"/>
    <property type="molecule type" value="Genomic_DNA"/>
</dbReference>
<dbReference type="EMBL" id="CP002686">
    <property type="protein sequence ID" value="AEE78365.1"/>
    <property type="molecule type" value="Genomic_DNA"/>
</dbReference>
<dbReference type="EMBL" id="AF462816">
    <property type="protein sequence ID" value="AAL58907.1"/>
    <property type="molecule type" value="mRNA"/>
</dbReference>
<dbReference type="EMBL" id="BT000828">
    <property type="protein sequence ID" value="AAN33203.1"/>
    <property type="molecule type" value="mRNA"/>
</dbReference>
<dbReference type="PIR" id="T06675">
    <property type="entry name" value="T06675"/>
</dbReference>
<dbReference type="RefSeq" id="NP_190391.1">
    <property type="nucleotide sequence ID" value="NM_114677.3"/>
</dbReference>
<dbReference type="SMR" id="Q9SU71"/>
<dbReference type="ComplexPortal" id="CPX-1617">
    <property type="entry name" value="EDS1-SAG101 complex, variant EDS1B"/>
</dbReference>
<dbReference type="ComplexPortal" id="CPX-1618">
    <property type="entry name" value="EDS1-PAD4 complex, variant EDS1B"/>
</dbReference>
<dbReference type="ComplexPortal" id="CPX-1619">
    <property type="entry name" value="EDS1-PAD4-SAG101 complex, variant EDS1B"/>
</dbReference>
<dbReference type="FunCoup" id="Q9SU71">
    <property type="interactions" value="301"/>
</dbReference>
<dbReference type="STRING" id="3702.Q9SU71"/>
<dbReference type="ESTHER" id="arath-T17F15.50">
    <property type="family name" value="Plant_lipase_EDS1-like"/>
</dbReference>
<dbReference type="PaxDb" id="3702-AT3G48080.1"/>
<dbReference type="ProteomicsDB" id="247068"/>
<dbReference type="EnsemblPlants" id="AT3G48080.1">
    <property type="protein sequence ID" value="AT3G48080.1"/>
    <property type="gene ID" value="AT3G48080"/>
</dbReference>
<dbReference type="GeneID" id="823963"/>
<dbReference type="Gramene" id="AT3G48080.1">
    <property type="protein sequence ID" value="AT3G48080.1"/>
    <property type="gene ID" value="AT3G48080"/>
</dbReference>
<dbReference type="KEGG" id="ath:AT3G48080"/>
<dbReference type="Araport" id="AT3G48080"/>
<dbReference type="TAIR" id="AT3G48080"/>
<dbReference type="eggNOG" id="ENOG502QR4E">
    <property type="taxonomic scope" value="Eukaryota"/>
</dbReference>
<dbReference type="HOGENOM" id="CLU_016367_2_0_1"/>
<dbReference type="InParanoid" id="Q9SU71"/>
<dbReference type="OMA" id="DRIFCHA"/>
<dbReference type="PhylomeDB" id="Q9SU71"/>
<dbReference type="PRO" id="PR:Q9SU71"/>
<dbReference type="Proteomes" id="UP000006548">
    <property type="component" value="Chromosome 3"/>
</dbReference>
<dbReference type="ExpressionAtlas" id="Q9SU71">
    <property type="expression patterns" value="baseline and differential"/>
</dbReference>
<dbReference type="GO" id="GO:0005829">
    <property type="term" value="C:cytosol"/>
    <property type="evidence" value="ECO:0000250"/>
    <property type="project" value="ComplexPortal"/>
</dbReference>
<dbReference type="GO" id="GO:0106093">
    <property type="term" value="C:EDS1 disease-resistance complex"/>
    <property type="evidence" value="ECO:0000250"/>
    <property type="project" value="ComplexPortal"/>
</dbReference>
<dbReference type="GO" id="GO:0005634">
    <property type="term" value="C:nucleus"/>
    <property type="evidence" value="ECO:0000250"/>
    <property type="project" value="ComplexPortal"/>
</dbReference>
<dbReference type="GO" id="GO:0016787">
    <property type="term" value="F:hydrolase activity"/>
    <property type="evidence" value="ECO:0007669"/>
    <property type="project" value="UniProtKB-KW"/>
</dbReference>
<dbReference type="GO" id="GO:0006629">
    <property type="term" value="P:lipid metabolic process"/>
    <property type="evidence" value="ECO:0007669"/>
    <property type="project" value="InterPro"/>
</dbReference>
<dbReference type="GO" id="GO:0009626">
    <property type="term" value="P:plant-type hypersensitive response"/>
    <property type="evidence" value="ECO:0000250"/>
    <property type="project" value="ComplexPortal"/>
</dbReference>
<dbReference type="GO" id="GO:0009862">
    <property type="term" value="P:systemic acquired resistance, salicylic acid mediated signaling pathway"/>
    <property type="evidence" value="ECO:0000250"/>
    <property type="project" value="ComplexPortal"/>
</dbReference>
<dbReference type="Gene3D" id="3.40.50.1820">
    <property type="entry name" value="alpha/beta hydrolase"/>
    <property type="match status" value="1"/>
</dbReference>
<dbReference type="InterPro" id="IPR029058">
    <property type="entry name" value="AB_hydrolase_fold"/>
</dbReference>
<dbReference type="InterPro" id="IPR044214">
    <property type="entry name" value="EDS1-like"/>
</dbReference>
<dbReference type="InterPro" id="IPR041266">
    <property type="entry name" value="EDS1_EP"/>
</dbReference>
<dbReference type="InterPro" id="IPR002921">
    <property type="entry name" value="Fungal_lipase-type"/>
</dbReference>
<dbReference type="PANTHER" id="PTHR47090">
    <property type="entry name" value="PROTEIN EDS1-RELATED"/>
    <property type="match status" value="1"/>
</dbReference>
<dbReference type="PANTHER" id="PTHR47090:SF2">
    <property type="entry name" value="PROTEIN EDS1-RELATED"/>
    <property type="match status" value="1"/>
</dbReference>
<dbReference type="Pfam" id="PF18117">
    <property type="entry name" value="EDS1_EP"/>
    <property type="match status" value="1"/>
</dbReference>
<dbReference type="Pfam" id="PF01764">
    <property type="entry name" value="Lipase_3"/>
    <property type="match status" value="1"/>
</dbReference>
<dbReference type="SUPFAM" id="SSF53474">
    <property type="entry name" value="alpha/beta-Hydrolases"/>
    <property type="match status" value="1"/>
</dbReference>
<dbReference type="PROSITE" id="PS00120">
    <property type="entry name" value="LIPASE_SER"/>
    <property type="match status" value="1"/>
</dbReference>
<sequence length="629" mass="71631">MAFEALTGVNGDLVTISWMASKGANQTEHYLKEEVGGTVFFAFRASFSSEDLFATENTSPFGEIKMKRNQFPCMRSIGNDVDTTVNEAFLKSLEVLIGPRTSFHASVQSAVDRKQQVVFTGHSFGGATAILATVWYLETYFIRDAYAAPEPRCVTFGAPLVGDYIFKHALGRENWSRFFVNFVTRFDIVPRIMLARKTTIEQTLSYVLGKLDSTRAPIHESDQVITEFYTRVMRDTYTVASKAVCQLIGNGEAFLETLSSFYELSPYRPVGTFVFSTQKRLVVVNNSDAILQMLFYTCQSNDEQELSVIPFLSIRDHHGYEELVQSIGIKLLNHLDLHNPLLDGENSIGSALDDLGMSTRARQCIHAALEAEKQRVENQKKIETKRDQIVERLTWIVEVYKPKCQAHKNGYYDSFKDSNEENDFKANVKRVELAGIFDEVLGLVKKGQLPDGFEGSRGWINLATQYRRLIEPLDISNYHGQLKNEDTGPYMLHGRPSRYKYAQRGYEHDILKPTGMIAKDVFWSKVNGLNLGLQQDIQEILKNSGSECGSCFWAEVEELKGKPYEEVQVRFKTLEGLLEGWIKDGEVDEKEIFLEGSTFRKWWNTLPDSHKIHAPLYPRERMMDETRAT</sequence>
<accession>Q9SU71</accession>
<gene>
    <name type="primary">EDS1B</name>
    <name evidence="3" type="synonym">EDS1-80</name>
    <name type="synonym">EDS1L</name>
    <name evidence="6" type="ordered locus">At3g48080</name>
    <name evidence="7" type="ORF">T17F15.50</name>
</gene>
<organism evidence="8">
    <name type="scientific">Arabidopsis thaliana</name>
    <name type="common">Mouse-ear cress</name>
    <dbReference type="NCBI Taxonomy" id="3702"/>
    <lineage>
        <taxon>Eukaryota</taxon>
        <taxon>Viridiplantae</taxon>
        <taxon>Streptophyta</taxon>
        <taxon>Embryophyta</taxon>
        <taxon>Tracheophyta</taxon>
        <taxon>Spermatophyta</taxon>
        <taxon>Magnoliopsida</taxon>
        <taxon>eudicotyledons</taxon>
        <taxon>Gunneridae</taxon>
        <taxon>Pentapetalae</taxon>
        <taxon>rosids</taxon>
        <taxon>malvids</taxon>
        <taxon>Brassicales</taxon>
        <taxon>Brassicaceae</taxon>
        <taxon>Camelineae</taxon>
        <taxon>Arabidopsis</taxon>
    </lineage>
</organism>
<reference key="1">
    <citation type="journal article" date="2000" name="Nature">
        <title>Sequence and analysis of chromosome 3 of the plant Arabidopsis thaliana.</title>
        <authorList>
            <person name="Salanoubat M."/>
            <person name="Lemcke K."/>
            <person name="Rieger M."/>
            <person name="Ansorge W."/>
            <person name="Unseld M."/>
            <person name="Fartmann B."/>
            <person name="Valle G."/>
            <person name="Bloecker H."/>
            <person name="Perez-Alonso M."/>
            <person name="Obermaier B."/>
            <person name="Delseny M."/>
            <person name="Boutry M."/>
            <person name="Grivell L.A."/>
            <person name="Mache R."/>
            <person name="Puigdomenech P."/>
            <person name="De Simone V."/>
            <person name="Choisne N."/>
            <person name="Artiguenave F."/>
            <person name="Robert C."/>
            <person name="Brottier P."/>
            <person name="Wincker P."/>
            <person name="Cattolico L."/>
            <person name="Weissenbach J."/>
            <person name="Saurin W."/>
            <person name="Quetier F."/>
            <person name="Schaefer M."/>
            <person name="Mueller-Auer S."/>
            <person name="Gabel C."/>
            <person name="Fuchs M."/>
            <person name="Benes V."/>
            <person name="Wurmbach E."/>
            <person name="Drzonek H."/>
            <person name="Erfle H."/>
            <person name="Jordan N."/>
            <person name="Bangert S."/>
            <person name="Wiedelmann R."/>
            <person name="Kranz H."/>
            <person name="Voss H."/>
            <person name="Holland R."/>
            <person name="Brandt P."/>
            <person name="Nyakatura G."/>
            <person name="Vezzi A."/>
            <person name="D'Angelo M."/>
            <person name="Pallavicini A."/>
            <person name="Toppo S."/>
            <person name="Simionati B."/>
            <person name="Conrad A."/>
            <person name="Hornischer K."/>
            <person name="Kauer G."/>
            <person name="Loehnert T.-H."/>
            <person name="Nordsiek G."/>
            <person name="Reichelt J."/>
            <person name="Scharfe M."/>
            <person name="Schoen O."/>
            <person name="Bargues M."/>
            <person name="Terol J."/>
            <person name="Climent J."/>
            <person name="Navarro P."/>
            <person name="Collado C."/>
            <person name="Perez-Perez A."/>
            <person name="Ottenwaelder B."/>
            <person name="Duchemin D."/>
            <person name="Cooke R."/>
            <person name="Laudie M."/>
            <person name="Berger-Llauro C."/>
            <person name="Purnelle B."/>
            <person name="Masuy D."/>
            <person name="de Haan M."/>
            <person name="Maarse A.C."/>
            <person name="Alcaraz J.-P."/>
            <person name="Cottet A."/>
            <person name="Casacuberta E."/>
            <person name="Monfort A."/>
            <person name="Argiriou A."/>
            <person name="Flores M."/>
            <person name="Liguori R."/>
            <person name="Vitale D."/>
            <person name="Mannhaupt G."/>
            <person name="Haase D."/>
            <person name="Schoof H."/>
            <person name="Rudd S."/>
            <person name="Zaccaria P."/>
            <person name="Mewes H.-W."/>
            <person name="Mayer K.F.X."/>
            <person name="Kaul S."/>
            <person name="Town C.D."/>
            <person name="Koo H.L."/>
            <person name="Tallon L.J."/>
            <person name="Jenkins J."/>
            <person name="Rooney T."/>
            <person name="Rizzo M."/>
            <person name="Walts A."/>
            <person name="Utterback T."/>
            <person name="Fujii C.Y."/>
            <person name="Shea T.P."/>
            <person name="Creasy T.H."/>
            <person name="Haas B."/>
            <person name="Maiti R."/>
            <person name="Wu D."/>
            <person name="Peterson J."/>
            <person name="Van Aken S."/>
            <person name="Pai G."/>
            <person name="Militscher J."/>
            <person name="Sellers P."/>
            <person name="Gill J.E."/>
            <person name="Feldblyum T.V."/>
            <person name="Preuss D."/>
            <person name="Lin X."/>
            <person name="Nierman W.C."/>
            <person name="Salzberg S.L."/>
            <person name="White O."/>
            <person name="Venter J.C."/>
            <person name="Fraser C.M."/>
            <person name="Kaneko T."/>
            <person name="Nakamura Y."/>
            <person name="Sato S."/>
            <person name="Kato T."/>
            <person name="Asamizu E."/>
            <person name="Sasamoto S."/>
            <person name="Kimura T."/>
            <person name="Idesawa K."/>
            <person name="Kawashima K."/>
            <person name="Kishida Y."/>
            <person name="Kiyokawa C."/>
            <person name="Kohara M."/>
            <person name="Matsumoto M."/>
            <person name="Matsuno A."/>
            <person name="Muraki A."/>
            <person name="Nakayama S."/>
            <person name="Nakazaki N."/>
            <person name="Shinpo S."/>
            <person name="Takeuchi C."/>
            <person name="Wada T."/>
            <person name="Watanabe A."/>
            <person name="Yamada M."/>
            <person name="Yasuda M."/>
            <person name="Tabata S."/>
        </authorList>
    </citation>
    <scope>NUCLEOTIDE SEQUENCE [LARGE SCALE GENOMIC DNA]</scope>
    <source>
        <strain>cv. Columbia</strain>
    </source>
</reference>
<reference key="2">
    <citation type="journal article" date="2017" name="Plant J.">
        <title>Araport11: a complete reannotation of the Arabidopsis thaliana reference genome.</title>
        <authorList>
            <person name="Cheng C.Y."/>
            <person name="Krishnakumar V."/>
            <person name="Chan A.P."/>
            <person name="Thibaud-Nissen F."/>
            <person name="Schobel S."/>
            <person name="Town C.D."/>
        </authorList>
    </citation>
    <scope>GENOME REANNOTATION</scope>
    <source>
        <strain>cv. Columbia</strain>
    </source>
</reference>
<reference key="3">
    <citation type="journal article" date="2003" name="Science">
        <title>Empirical analysis of transcriptional activity in the Arabidopsis genome.</title>
        <authorList>
            <person name="Yamada K."/>
            <person name="Lim J."/>
            <person name="Dale J.M."/>
            <person name="Chen H."/>
            <person name="Shinn P."/>
            <person name="Palm C.J."/>
            <person name="Southwick A.M."/>
            <person name="Wu H.C."/>
            <person name="Kim C.J."/>
            <person name="Nguyen M."/>
            <person name="Pham P.K."/>
            <person name="Cheuk R.F."/>
            <person name="Karlin-Newmann G."/>
            <person name="Liu S.X."/>
            <person name="Lam B."/>
            <person name="Sakano H."/>
            <person name="Wu T."/>
            <person name="Yu G."/>
            <person name="Miranda M."/>
            <person name="Quach H.L."/>
            <person name="Tripp M."/>
            <person name="Chang C.H."/>
            <person name="Lee J.M."/>
            <person name="Toriumi M.J."/>
            <person name="Chan M.M."/>
            <person name="Tang C.C."/>
            <person name="Onodera C.S."/>
            <person name="Deng J.M."/>
            <person name="Akiyama K."/>
            <person name="Ansari Y."/>
            <person name="Arakawa T."/>
            <person name="Banh J."/>
            <person name="Banno F."/>
            <person name="Bowser L."/>
            <person name="Brooks S.Y."/>
            <person name="Carninci P."/>
            <person name="Chao Q."/>
            <person name="Choy N."/>
            <person name="Enju A."/>
            <person name="Goldsmith A.D."/>
            <person name="Gurjal M."/>
            <person name="Hansen N.F."/>
            <person name="Hayashizaki Y."/>
            <person name="Johnson-Hopson C."/>
            <person name="Hsuan V.W."/>
            <person name="Iida K."/>
            <person name="Karnes M."/>
            <person name="Khan S."/>
            <person name="Koesema E."/>
            <person name="Ishida J."/>
            <person name="Jiang P.X."/>
            <person name="Jones T."/>
            <person name="Kawai J."/>
            <person name="Kamiya A."/>
            <person name="Meyers C."/>
            <person name="Nakajima M."/>
            <person name="Narusaka M."/>
            <person name="Seki M."/>
            <person name="Sakurai T."/>
            <person name="Satou M."/>
            <person name="Tamse R."/>
            <person name="Vaysberg M."/>
            <person name="Wallender E.K."/>
            <person name="Wong C."/>
            <person name="Yamamura Y."/>
            <person name="Yuan S."/>
            <person name="Shinozaki K."/>
            <person name="Davis R.W."/>
            <person name="Theologis A."/>
            <person name="Ecker J.R."/>
        </authorList>
    </citation>
    <scope>NUCLEOTIDE SEQUENCE [LARGE SCALE MRNA]</scope>
    <source>
        <strain>cv. Columbia</strain>
    </source>
</reference>
<reference key="4">
    <citation type="journal article" date="2004" name="Plant Cell">
        <title>A haplotype-specific Resistance gene regulated by BONZAI1 mediates temperature-dependent growth control in Arabidopsis.</title>
        <authorList>
            <person name="Yang S."/>
            <person name="Hua J."/>
        </authorList>
    </citation>
    <scope>IDENTIFICATION</scope>
</reference>
<reference key="5">
    <citation type="journal article" date="2011" name="PLoS Pathog.">
        <title>SAG101 forms a ternary complex with EDS1 and PAD4 and is required for resistance signaling against turnip crinkle virus.</title>
        <authorList>
            <person name="Zhu S."/>
            <person name="Jeong R.-D."/>
            <person name="Venugopal S.C."/>
            <person name="Lapchyk L."/>
            <person name="Navarre D."/>
            <person name="Kachroo A."/>
            <person name="Kachroo P."/>
        </authorList>
    </citation>
    <scope>FUNCTION</scope>
    <scope>DISRUPTION PHENOTYPE</scope>
    <scope>INDUCTION BY SALICYLIC ACID AND VIRUS INFECTION</scope>
    <scope>INTERACTION WITH PAD4 AND SAG101</scope>
    <source>
        <strain>cv. Columbia</strain>
    </source>
</reference>
<name>EDSBC_ARATH</name>
<feature type="chain" id="PRO_0000431442" description="Protein EDS1B">
    <location>
        <begin position="1"/>
        <end position="629"/>
    </location>
</feature>
<feature type="active site" description="Nucleophile" evidence="1">
    <location>
        <position position="123"/>
    </location>
</feature>
<feature type="active site" description="Charge relay system" evidence="1">
    <location>
        <position position="187"/>
    </location>
</feature>
<feature type="active site" description="Charge relay system" evidence="1">
    <location>
        <position position="317"/>
    </location>
</feature>
<evidence type="ECO:0000250" key="1">
    <source>
        <dbReference type="UniProtKB" id="P19515"/>
    </source>
</evidence>
<evidence type="ECO:0000269" key="2">
    <source>
    </source>
</evidence>
<evidence type="ECO:0000303" key="3">
    <source>
    </source>
</evidence>
<evidence type="ECO:0000305" key="4"/>
<evidence type="ECO:0000305" key="5">
    <source>
    </source>
</evidence>
<evidence type="ECO:0000312" key="6">
    <source>
        <dbReference type="Araport" id="AT3G48080"/>
    </source>
</evidence>
<evidence type="ECO:0000312" key="7">
    <source>
        <dbReference type="EMBL" id="CAB41131.1"/>
    </source>
</evidence>
<evidence type="ECO:0000312" key="8">
    <source>
        <dbReference type="Proteomes" id="UP000006548"/>
    </source>
</evidence>
<protein>
    <recommendedName>
        <fullName evidence="4">Protein EDS1B</fullName>
    </recommendedName>
    <alternativeName>
        <fullName>Enhanced disease susceptibility 1 protein B</fullName>
    </alternativeName>
</protein>
<keyword id="KW-0963">Cytoplasm</keyword>
<keyword id="KW-0378">Hydrolase</keyword>
<keyword id="KW-0539">Nucleus</keyword>
<keyword id="KW-0611">Plant defense</keyword>
<keyword id="KW-1185">Reference proteome</keyword>
<comment type="function">
    <text evidence="2 5">Acts as a second functional copy of EDS1. Can mediate HRT-mediated resistance to turnip crinkle virus.</text>
</comment>
<comment type="subunit">
    <text evidence="2">Interacts (via N-terminus) with PAD4 and SAG101 (PubMed:22072959). Part of a nuclear complex made of EDS1, PAD4 and SAG101, that can be redirected to the cytoplasm in the presence of an extranuclear form of EDS1 (PubMed:22072959). Does not interact with itself or with EDS1 (PubMed:22072959).</text>
</comment>
<comment type="subcellular location">
    <subcellularLocation>
        <location evidence="2">Nucleus</location>
    </subcellularLocation>
    <subcellularLocation>
        <location evidence="2">Cytoplasm</location>
    </subcellularLocation>
    <text evidence="2">Found in both the nucleus and diffuse in the cytosol when associated with PAD4 and only in the nucleus when associated with SAG101.</text>
</comment>
<comment type="induction">
    <text evidence="2">Up-regulated by salicylic acid or upon turnip crinkle virus infection.</text>
</comment>
<comment type="disruption phenotype">
    <text evidence="2">No effect on RPS4-mediated resistance against avrRps4 bacteria, due to the redundancy with EDS1.</text>
</comment>
<comment type="miscellaneous">
    <text evidence="2">Ecotypes cv. Landsberg erecta and cv. Di-17 express a probably non-functional truncated protein comprising of only the first 162 amino acids. This protein is not expressed in cv. Wassilewskija.</text>
</comment>
<proteinExistence type="evidence at protein level"/>